<proteinExistence type="inferred from homology"/>
<dbReference type="EMBL" id="CP001401">
    <property type="protein sequence ID" value="ACP55752.1"/>
    <property type="molecule type" value="Genomic_DNA"/>
</dbReference>
<dbReference type="RefSeq" id="WP_012718968.1">
    <property type="nucleotide sequence ID" value="NC_012632.1"/>
</dbReference>
<dbReference type="SMR" id="C3MZC0"/>
<dbReference type="GeneID" id="7812222"/>
<dbReference type="KEGG" id="sim:M1627_1881"/>
<dbReference type="HOGENOM" id="CLU_053173_0_0_2"/>
<dbReference type="Proteomes" id="UP000002307">
    <property type="component" value="Chromosome"/>
</dbReference>
<dbReference type="GO" id="GO:0022625">
    <property type="term" value="C:cytosolic large ribosomal subunit"/>
    <property type="evidence" value="ECO:0007669"/>
    <property type="project" value="TreeGrafter"/>
</dbReference>
<dbReference type="GO" id="GO:0070180">
    <property type="term" value="F:large ribosomal subunit rRNA binding"/>
    <property type="evidence" value="ECO:0007669"/>
    <property type="project" value="UniProtKB-UniRule"/>
</dbReference>
<dbReference type="GO" id="GO:0003735">
    <property type="term" value="F:structural constituent of ribosome"/>
    <property type="evidence" value="ECO:0007669"/>
    <property type="project" value="TreeGrafter"/>
</dbReference>
<dbReference type="GO" id="GO:0002181">
    <property type="term" value="P:cytoplasmic translation"/>
    <property type="evidence" value="ECO:0007669"/>
    <property type="project" value="TreeGrafter"/>
</dbReference>
<dbReference type="GO" id="GO:0000027">
    <property type="term" value="P:ribosomal large subunit assembly"/>
    <property type="evidence" value="ECO:0007669"/>
    <property type="project" value="TreeGrafter"/>
</dbReference>
<dbReference type="CDD" id="cd05795">
    <property type="entry name" value="Ribosomal_P0_L10e"/>
    <property type="match status" value="1"/>
</dbReference>
<dbReference type="FunFam" id="3.90.105.20:FF:000001">
    <property type="entry name" value="60S acidic ribosomal protein P0"/>
    <property type="match status" value="1"/>
</dbReference>
<dbReference type="Gene3D" id="3.30.70.1730">
    <property type="match status" value="1"/>
</dbReference>
<dbReference type="Gene3D" id="3.90.105.20">
    <property type="match status" value="1"/>
</dbReference>
<dbReference type="Gene3D" id="6.10.140.760">
    <property type="match status" value="1"/>
</dbReference>
<dbReference type="HAMAP" id="MF_00280">
    <property type="entry name" value="Ribosomal_uL10_arch"/>
    <property type="match status" value="1"/>
</dbReference>
<dbReference type="InterPro" id="IPR050323">
    <property type="entry name" value="Ribosomal_protein_uL10"/>
</dbReference>
<dbReference type="InterPro" id="IPR001790">
    <property type="entry name" value="Ribosomal_uL10"/>
</dbReference>
<dbReference type="InterPro" id="IPR040637">
    <property type="entry name" value="Ribosomal_uL10-like_insert"/>
</dbReference>
<dbReference type="InterPro" id="IPR043164">
    <property type="entry name" value="Ribosomal_uL10-like_insert_sf"/>
</dbReference>
<dbReference type="InterPro" id="IPR043141">
    <property type="entry name" value="Ribosomal_uL10-like_sf"/>
</dbReference>
<dbReference type="InterPro" id="IPR022909">
    <property type="entry name" value="Ribosomal_uL10_arc"/>
</dbReference>
<dbReference type="NCBIfam" id="NF003095">
    <property type="entry name" value="PRK04019.1-1"/>
    <property type="match status" value="1"/>
</dbReference>
<dbReference type="PANTHER" id="PTHR45699">
    <property type="entry name" value="60S ACIDIC RIBOSOMAL PROTEIN P0"/>
    <property type="match status" value="1"/>
</dbReference>
<dbReference type="PANTHER" id="PTHR45699:SF3">
    <property type="entry name" value="LARGE RIBOSOMAL SUBUNIT PROTEIN UL10"/>
    <property type="match status" value="1"/>
</dbReference>
<dbReference type="Pfam" id="PF00466">
    <property type="entry name" value="Ribosomal_L10"/>
    <property type="match status" value="1"/>
</dbReference>
<dbReference type="Pfam" id="PF17777">
    <property type="entry name" value="RL10P_insert"/>
    <property type="match status" value="1"/>
</dbReference>
<dbReference type="SUPFAM" id="SSF160369">
    <property type="entry name" value="Ribosomal protein L10-like"/>
    <property type="match status" value="1"/>
</dbReference>
<protein>
    <recommendedName>
        <fullName evidence="1">Large ribosomal subunit protein uL10</fullName>
    </recommendedName>
    <alternativeName>
        <fullName evidence="3">50S ribosomal protein L10</fullName>
    </alternativeName>
    <alternativeName>
        <fullName evidence="1">Acidic ribosomal protein P0 homolog</fullName>
    </alternativeName>
</protein>
<reference key="1">
    <citation type="journal article" date="2009" name="Proc. Natl. Acad. Sci. U.S.A.">
        <title>Biogeography of the Sulfolobus islandicus pan-genome.</title>
        <authorList>
            <person name="Reno M.L."/>
            <person name="Held N.L."/>
            <person name="Fields C.J."/>
            <person name="Burke P.V."/>
            <person name="Whitaker R.J."/>
        </authorList>
    </citation>
    <scope>NUCLEOTIDE SEQUENCE [LARGE SCALE GENOMIC DNA]</scope>
    <source>
        <strain>M.16.27</strain>
    </source>
</reference>
<feature type="chain" id="PRO_1000204812" description="Large ribosomal subunit protein uL10">
    <location>
        <begin position="1"/>
        <end position="338"/>
    </location>
</feature>
<feature type="region of interest" description="Disordered" evidence="2">
    <location>
        <begin position="298"/>
        <end position="338"/>
    </location>
</feature>
<feature type="compositionally biased region" description="Low complexity" evidence="2">
    <location>
        <begin position="298"/>
        <end position="308"/>
    </location>
</feature>
<feature type="compositionally biased region" description="Basic and acidic residues" evidence="2">
    <location>
        <begin position="309"/>
        <end position="325"/>
    </location>
</feature>
<accession>C3MZC0</accession>
<name>RL10_SACI3</name>
<evidence type="ECO:0000255" key="1">
    <source>
        <dbReference type="HAMAP-Rule" id="MF_00280"/>
    </source>
</evidence>
<evidence type="ECO:0000256" key="2">
    <source>
        <dbReference type="SAM" id="MobiDB-lite"/>
    </source>
</evidence>
<evidence type="ECO:0000305" key="3"/>
<keyword id="KW-0687">Ribonucleoprotein</keyword>
<keyword id="KW-0689">Ribosomal protein</keyword>
<keyword id="KW-0694">RNA-binding</keyword>
<keyword id="KW-0699">rRNA-binding</keyword>
<gene>
    <name evidence="1" type="primary">rpl10</name>
    <name evidence="1" type="synonym">rplP0</name>
    <name type="ordered locus">M1627_1881</name>
</gene>
<comment type="function">
    <text evidence="1">Forms part of the ribosomal stalk, playing a central role in the interaction of the ribosome with GTP-bound translation factors.</text>
</comment>
<comment type="subunit">
    <text evidence="1">Part of the 50S ribosomal subunit. Forms part of the ribosomal stalk which helps the ribosome interact with GTP-bound translation factors. Forms a heptameric L10(L12)2(L12)2(L12)2 complex, where L10 forms an elongated spine to which the L12 dimers bind in a sequential fashion.</text>
</comment>
<comment type="similarity">
    <text evidence="1">Belongs to the universal ribosomal protein uL10 family.</text>
</comment>
<sequence length="338" mass="37049">MKRLALALKQKKVASWKLEEVKELTELIKNSNTILIGSLEGFPADKLHEIRKKLRGKAIIKVTKNTLFKIAAKNAGINTEKLEQYLTGPNVFIFTKDNPFLTNMFFENYKLRRYAMPGDKAEEEVIIPAGDTGMPAGPILSVFGKLKVQTKVQDGKVHVVKDTVVAKPGDVIPTEALPILQKLGIMPVYVKLKIKVAYHEGLVIPAENLKLNLEGYRSNIAEAYRNAFTLAVEIAYPVPDVLKFTISKVFKNAIALASEIGYLTPESAQAVISKAVAKAYALATAISGKVDLGVQLPAAQQTQTQQSTAEEKKEEKKEEEKKGPSEEEIGSGLASLFG</sequence>
<organism>
    <name type="scientific">Saccharolobus islandicus (strain M.16.27)</name>
    <name type="common">Sulfolobus islandicus</name>
    <dbReference type="NCBI Taxonomy" id="427318"/>
    <lineage>
        <taxon>Archaea</taxon>
        <taxon>Thermoproteota</taxon>
        <taxon>Thermoprotei</taxon>
        <taxon>Sulfolobales</taxon>
        <taxon>Sulfolobaceae</taxon>
        <taxon>Saccharolobus</taxon>
    </lineage>
</organism>